<name>ARNB_ECOUT</name>
<keyword id="KW-0032">Aminotransferase</keyword>
<keyword id="KW-0046">Antibiotic resistance</keyword>
<keyword id="KW-0441">Lipid A biosynthesis</keyword>
<keyword id="KW-0444">Lipid biosynthesis</keyword>
<keyword id="KW-0443">Lipid metabolism</keyword>
<keyword id="KW-0448">Lipopolysaccharide biosynthesis</keyword>
<keyword id="KW-0663">Pyridoxal phosphate</keyword>
<keyword id="KW-0808">Transferase</keyword>
<protein>
    <recommendedName>
        <fullName evidence="1">UDP-4-amino-4-deoxy-L-arabinose--oxoglutarate aminotransferase</fullName>
        <ecNumber evidence="1">2.6.1.87</ecNumber>
    </recommendedName>
    <alternativeName>
        <fullName evidence="1">UDP-(beta-L-threo-pentapyranosyl-4''-ulose diphosphate) aminotransferase</fullName>
        <shortName evidence="1">UDP-Ara4O aminotransferase</shortName>
    </alternativeName>
    <alternativeName>
        <fullName evidence="1">UDP-4-amino-4-deoxy-L-arabinose aminotransferase</fullName>
    </alternativeName>
</protein>
<dbReference type="EC" id="2.6.1.87" evidence="1"/>
<dbReference type="EMBL" id="CP000243">
    <property type="protein sequence ID" value="ABE08002.1"/>
    <property type="status" value="ALT_INIT"/>
    <property type="molecule type" value="Genomic_DNA"/>
</dbReference>
<dbReference type="RefSeq" id="WP_011076488.1">
    <property type="nucleotide sequence ID" value="NZ_CP064825.1"/>
</dbReference>
<dbReference type="SMR" id="Q1R9G2"/>
<dbReference type="KEGG" id="eci:UTI89_C2535"/>
<dbReference type="HOGENOM" id="CLU_033332_0_3_6"/>
<dbReference type="UniPathway" id="UPA00030"/>
<dbReference type="UniPathway" id="UPA00032">
    <property type="reaction ID" value="UER00493"/>
</dbReference>
<dbReference type="Proteomes" id="UP000001952">
    <property type="component" value="Chromosome"/>
</dbReference>
<dbReference type="GO" id="GO:0016020">
    <property type="term" value="C:membrane"/>
    <property type="evidence" value="ECO:0007669"/>
    <property type="project" value="GOC"/>
</dbReference>
<dbReference type="GO" id="GO:0030170">
    <property type="term" value="F:pyridoxal phosphate binding"/>
    <property type="evidence" value="ECO:0007669"/>
    <property type="project" value="TreeGrafter"/>
</dbReference>
<dbReference type="GO" id="GO:0099620">
    <property type="term" value="F:UDP-4-amino-4-deoxy-L-arabinose aminotransferase"/>
    <property type="evidence" value="ECO:0007669"/>
    <property type="project" value="UniProtKB-EC"/>
</dbReference>
<dbReference type="GO" id="GO:0009245">
    <property type="term" value="P:lipid A biosynthetic process"/>
    <property type="evidence" value="ECO:0007669"/>
    <property type="project" value="UniProtKB-KW"/>
</dbReference>
<dbReference type="GO" id="GO:0009103">
    <property type="term" value="P:lipopolysaccharide biosynthetic process"/>
    <property type="evidence" value="ECO:0007669"/>
    <property type="project" value="UniProtKB-UniRule"/>
</dbReference>
<dbReference type="GO" id="GO:0046677">
    <property type="term" value="P:response to antibiotic"/>
    <property type="evidence" value="ECO:0007669"/>
    <property type="project" value="UniProtKB-KW"/>
</dbReference>
<dbReference type="CDD" id="cd00616">
    <property type="entry name" value="AHBA_syn"/>
    <property type="match status" value="1"/>
</dbReference>
<dbReference type="FunFam" id="3.40.640.10:FF:000040">
    <property type="entry name" value="UDP-4-amino-4-deoxy-L-arabinose--oxoglutarate aminotransferase"/>
    <property type="match status" value="1"/>
</dbReference>
<dbReference type="FunFam" id="3.90.1150.10:FF:000030">
    <property type="entry name" value="UDP-4-amino-4-deoxy-L-arabinose--oxoglutarate aminotransferase"/>
    <property type="match status" value="1"/>
</dbReference>
<dbReference type="Gene3D" id="3.90.1150.10">
    <property type="entry name" value="Aspartate Aminotransferase, domain 1"/>
    <property type="match status" value="1"/>
</dbReference>
<dbReference type="Gene3D" id="3.40.640.10">
    <property type="entry name" value="Type I PLP-dependent aspartate aminotransferase-like (Major domain)"/>
    <property type="match status" value="1"/>
</dbReference>
<dbReference type="HAMAP" id="MF_01167">
    <property type="entry name" value="ArnB_transfer"/>
    <property type="match status" value="1"/>
</dbReference>
<dbReference type="InterPro" id="IPR022850">
    <property type="entry name" value="ArnB_NH2Trfase"/>
</dbReference>
<dbReference type="InterPro" id="IPR000653">
    <property type="entry name" value="DegT/StrS_aminotransferase"/>
</dbReference>
<dbReference type="InterPro" id="IPR015424">
    <property type="entry name" value="PyrdxlP-dep_Trfase"/>
</dbReference>
<dbReference type="InterPro" id="IPR015421">
    <property type="entry name" value="PyrdxlP-dep_Trfase_major"/>
</dbReference>
<dbReference type="InterPro" id="IPR015422">
    <property type="entry name" value="PyrdxlP-dep_Trfase_small"/>
</dbReference>
<dbReference type="NCBIfam" id="NF008658">
    <property type="entry name" value="PRK11658.1"/>
    <property type="match status" value="1"/>
</dbReference>
<dbReference type="PANTHER" id="PTHR30244">
    <property type="entry name" value="TRANSAMINASE"/>
    <property type="match status" value="1"/>
</dbReference>
<dbReference type="PANTHER" id="PTHR30244:SF41">
    <property type="entry name" value="UDP-4-AMINO-4-DEOXY-L-ARABINOSE--OXOGLUTARATE AMINOTRANSFERASE"/>
    <property type="match status" value="1"/>
</dbReference>
<dbReference type="Pfam" id="PF01041">
    <property type="entry name" value="DegT_DnrJ_EryC1"/>
    <property type="match status" value="1"/>
</dbReference>
<dbReference type="PIRSF" id="PIRSF000390">
    <property type="entry name" value="PLP_StrS"/>
    <property type="match status" value="1"/>
</dbReference>
<dbReference type="SUPFAM" id="SSF53383">
    <property type="entry name" value="PLP-dependent transferases"/>
    <property type="match status" value="1"/>
</dbReference>
<comment type="function">
    <text evidence="1">Catalyzes the conversion of UDP-4-keto-arabinose (UDP-Ara4O) to UDP-4-amino-4-deoxy-L-arabinose (UDP-L-Ara4N). The modified arabinose is attached to lipid A and is required for resistance to polymyxin and cationic antimicrobial peptides.</text>
</comment>
<comment type="catalytic activity">
    <reaction evidence="1">
        <text>UDP-4-amino-4-deoxy-beta-L-arabinose + 2-oxoglutarate = UDP-beta-L-threo-pentopyranos-4-ulose + L-glutamate</text>
        <dbReference type="Rhea" id="RHEA:24710"/>
        <dbReference type="ChEBI" id="CHEBI:16810"/>
        <dbReference type="ChEBI" id="CHEBI:29985"/>
        <dbReference type="ChEBI" id="CHEBI:58708"/>
        <dbReference type="ChEBI" id="CHEBI:58710"/>
        <dbReference type="EC" id="2.6.1.87"/>
    </reaction>
</comment>
<comment type="cofactor">
    <cofactor evidence="1">
        <name>pyridoxal 5'-phosphate</name>
        <dbReference type="ChEBI" id="CHEBI:597326"/>
    </cofactor>
</comment>
<comment type="pathway">
    <text evidence="1">Nucleotide-sugar biosynthesis; UDP-4-deoxy-4-formamido-beta-L-arabinose biosynthesis; UDP-4-deoxy-4-formamido-beta-L-arabinose from UDP-alpha-D-glucuronate: step 2/3.</text>
</comment>
<comment type="pathway">
    <text evidence="1">Bacterial outer membrane biogenesis; lipopolysaccharide biosynthesis.</text>
</comment>
<comment type="subunit">
    <text evidence="1">Homodimer.</text>
</comment>
<comment type="similarity">
    <text evidence="1">Belongs to the DegT/DnrJ/EryC1 family. ArnB subfamily.</text>
</comment>
<comment type="sequence caution" evidence="2">
    <conflict type="erroneous initiation">
        <sequence resource="EMBL-CDS" id="ABE08002"/>
    </conflict>
</comment>
<organism>
    <name type="scientific">Escherichia coli (strain UTI89 / UPEC)</name>
    <dbReference type="NCBI Taxonomy" id="364106"/>
    <lineage>
        <taxon>Bacteria</taxon>
        <taxon>Pseudomonadati</taxon>
        <taxon>Pseudomonadota</taxon>
        <taxon>Gammaproteobacteria</taxon>
        <taxon>Enterobacterales</taxon>
        <taxon>Enterobacteriaceae</taxon>
        <taxon>Escherichia</taxon>
    </lineage>
</organism>
<gene>
    <name evidence="1" type="primary">arnB</name>
    <name type="ordered locus">UTI89_C2535</name>
</gene>
<accession>Q1R9G2</accession>
<feature type="chain" id="PRO_0000380534" description="UDP-4-amino-4-deoxy-L-arabinose--oxoglutarate aminotransferase">
    <location>
        <begin position="1"/>
        <end position="379"/>
    </location>
</feature>
<feature type="modified residue" description="N6-(pyridoxal phosphate)lysine" evidence="1">
    <location>
        <position position="182"/>
    </location>
</feature>
<evidence type="ECO:0000255" key="1">
    <source>
        <dbReference type="HAMAP-Rule" id="MF_01167"/>
    </source>
</evidence>
<evidence type="ECO:0000305" key="2"/>
<reference key="1">
    <citation type="journal article" date="2006" name="Proc. Natl. Acad. Sci. U.S.A.">
        <title>Identification of genes subject to positive selection in uropathogenic strains of Escherichia coli: a comparative genomics approach.</title>
        <authorList>
            <person name="Chen S.L."/>
            <person name="Hung C.-S."/>
            <person name="Xu J."/>
            <person name="Reigstad C.S."/>
            <person name="Magrini V."/>
            <person name="Sabo A."/>
            <person name="Blasiar D."/>
            <person name="Bieri T."/>
            <person name="Meyer R.R."/>
            <person name="Ozersky P."/>
            <person name="Armstrong J.R."/>
            <person name="Fulton R.S."/>
            <person name="Latreille J.P."/>
            <person name="Spieth J."/>
            <person name="Hooton T.M."/>
            <person name="Mardis E.R."/>
            <person name="Hultgren S.J."/>
            <person name="Gordon J.I."/>
        </authorList>
    </citation>
    <scope>NUCLEOTIDE SEQUENCE [LARGE SCALE GENOMIC DNA]</scope>
    <source>
        <strain>UTI89 / UPEC</strain>
    </source>
</reference>
<sequence>MSGFLPFSRPAMGVEELAAVKEVLESGWITTGPKNQALEQAFCQLTGNQHAIAVSSATAGMHITLMALEIGKGDEVITPSLTWVSTLNMISLLGATPVMVDVDRDTLMVTPEAIEAAITPRTKAIIPVHYAGAPADIDAIRAIGERYGIAVIEDAAHAVGTYYKGRHIGAKGTAIFSFHAIKNITCAEGGLIVTDNENLARQLRMLKFHGLGVDAYDRHTWGRAPQAEVLTPGYKYNLTDINAAIALTQLVKLEHLNTRRREIAQQYQQALAALPFQPLSLPAWPHVHAWHLFIIRVDEQRCGISRDALMEALKERGIGTGLHFRAAHTQKYYRERFPTLSLPNTEWNSERICSLPLFPDMTTADADRVITALQQLAGQ</sequence>
<proteinExistence type="inferred from homology"/>